<dbReference type="EMBL" id="CP001020">
    <property type="protein sequence ID" value="ACJ19727.1"/>
    <property type="molecule type" value="Genomic_DNA"/>
</dbReference>
<dbReference type="RefSeq" id="WP_005771523.1">
    <property type="nucleotide sequence ID" value="NC_011528.1"/>
</dbReference>
<dbReference type="SMR" id="B6J5E3"/>
<dbReference type="KEGG" id="cbc:CbuK_0444"/>
<dbReference type="HOGENOM" id="CLU_093315_2_2_6"/>
<dbReference type="GO" id="GO:1990904">
    <property type="term" value="C:ribonucleoprotein complex"/>
    <property type="evidence" value="ECO:0007669"/>
    <property type="project" value="UniProtKB-KW"/>
</dbReference>
<dbReference type="GO" id="GO:0005840">
    <property type="term" value="C:ribosome"/>
    <property type="evidence" value="ECO:0007669"/>
    <property type="project" value="UniProtKB-KW"/>
</dbReference>
<dbReference type="GO" id="GO:0019843">
    <property type="term" value="F:rRNA binding"/>
    <property type="evidence" value="ECO:0007669"/>
    <property type="project" value="UniProtKB-UniRule"/>
</dbReference>
<dbReference type="GO" id="GO:0003735">
    <property type="term" value="F:structural constituent of ribosome"/>
    <property type="evidence" value="ECO:0007669"/>
    <property type="project" value="InterPro"/>
</dbReference>
<dbReference type="GO" id="GO:0006412">
    <property type="term" value="P:translation"/>
    <property type="evidence" value="ECO:0007669"/>
    <property type="project" value="UniProtKB-UniRule"/>
</dbReference>
<dbReference type="CDD" id="cd06089">
    <property type="entry name" value="KOW_RPL26"/>
    <property type="match status" value="1"/>
</dbReference>
<dbReference type="FunFam" id="2.30.30.30:FF:000004">
    <property type="entry name" value="50S ribosomal protein L24"/>
    <property type="match status" value="1"/>
</dbReference>
<dbReference type="Gene3D" id="2.30.30.30">
    <property type="match status" value="1"/>
</dbReference>
<dbReference type="HAMAP" id="MF_01326_B">
    <property type="entry name" value="Ribosomal_uL24_B"/>
    <property type="match status" value="1"/>
</dbReference>
<dbReference type="InterPro" id="IPR005824">
    <property type="entry name" value="KOW"/>
</dbReference>
<dbReference type="InterPro" id="IPR014722">
    <property type="entry name" value="Rib_uL2_dom2"/>
</dbReference>
<dbReference type="InterPro" id="IPR003256">
    <property type="entry name" value="Ribosomal_uL24"/>
</dbReference>
<dbReference type="InterPro" id="IPR005825">
    <property type="entry name" value="Ribosomal_uL24_CS"/>
</dbReference>
<dbReference type="InterPro" id="IPR041988">
    <property type="entry name" value="Ribosomal_uL24_KOW"/>
</dbReference>
<dbReference type="InterPro" id="IPR008991">
    <property type="entry name" value="Translation_prot_SH3-like_sf"/>
</dbReference>
<dbReference type="NCBIfam" id="TIGR01079">
    <property type="entry name" value="rplX_bact"/>
    <property type="match status" value="1"/>
</dbReference>
<dbReference type="PANTHER" id="PTHR12903">
    <property type="entry name" value="MITOCHONDRIAL RIBOSOMAL PROTEIN L24"/>
    <property type="match status" value="1"/>
</dbReference>
<dbReference type="Pfam" id="PF00467">
    <property type="entry name" value="KOW"/>
    <property type="match status" value="1"/>
</dbReference>
<dbReference type="Pfam" id="PF17136">
    <property type="entry name" value="ribosomal_L24"/>
    <property type="match status" value="1"/>
</dbReference>
<dbReference type="SMART" id="SM00739">
    <property type="entry name" value="KOW"/>
    <property type="match status" value="1"/>
</dbReference>
<dbReference type="SUPFAM" id="SSF50104">
    <property type="entry name" value="Translation proteins SH3-like domain"/>
    <property type="match status" value="1"/>
</dbReference>
<dbReference type="PROSITE" id="PS01108">
    <property type="entry name" value="RIBOSOMAL_L24"/>
    <property type="match status" value="1"/>
</dbReference>
<organism>
    <name type="scientific">Coxiella burnetii (strain CbuK_Q154)</name>
    <name type="common">Coxiella burnetii (strain Q154)</name>
    <dbReference type="NCBI Taxonomy" id="434924"/>
    <lineage>
        <taxon>Bacteria</taxon>
        <taxon>Pseudomonadati</taxon>
        <taxon>Pseudomonadota</taxon>
        <taxon>Gammaproteobacteria</taxon>
        <taxon>Legionellales</taxon>
        <taxon>Coxiellaceae</taxon>
        <taxon>Coxiella</taxon>
    </lineage>
</organism>
<protein>
    <recommendedName>
        <fullName evidence="1">Large ribosomal subunit protein uL24</fullName>
    </recommendedName>
    <alternativeName>
        <fullName evidence="2">50S ribosomal protein L24</fullName>
    </alternativeName>
</protein>
<comment type="function">
    <text evidence="1">One of two assembly initiator proteins, it binds directly to the 5'-end of the 23S rRNA, where it nucleates assembly of the 50S subunit.</text>
</comment>
<comment type="function">
    <text evidence="1">One of the proteins that surrounds the polypeptide exit tunnel on the outside of the subunit.</text>
</comment>
<comment type="subunit">
    <text evidence="1">Part of the 50S ribosomal subunit.</text>
</comment>
<comment type="similarity">
    <text evidence="1">Belongs to the universal ribosomal protein uL24 family.</text>
</comment>
<name>RL24_COXB1</name>
<feature type="chain" id="PRO_1000141984" description="Large ribosomal subunit protein uL24">
    <location>
        <begin position="1"/>
        <end position="107"/>
    </location>
</feature>
<accession>B6J5E3</accession>
<proteinExistence type="inferred from homology"/>
<keyword id="KW-0687">Ribonucleoprotein</keyword>
<keyword id="KW-0689">Ribosomal protein</keyword>
<keyword id="KW-0694">RNA-binding</keyword>
<keyword id="KW-0699">rRNA-binding</keyword>
<sequence>MAIKKIKKDDTVIVITGRDKGRQGKVLKVLPNSRLLVEGINLVKKHVKPNPNKNEQGGILERELSIHVSNVAIYNPAAKKADRVGIKTLEDGSKVRIFKSNGEVIDV</sequence>
<reference key="1">
    <citation type="journal article" date="2009" name="Infect. Immun.">
        <title>Comparative genomics reveal extensive transposon-mediated genomic plasticity and diversity among potential effector proteins within the genus Coxiella.</title>
        <authorList>
            <person name="Beare P.A."/>
            <person name="Unsworth N."/>
            <person name="Andoh M."/>
            <person name="Voth D.E."/>
            <person name="Omsland A."/>
            <person name="Gilk S.D."/>
            <person name="Williams K.P."/>
            <person name="Sobral B.W."/>
            <person name="Kupko J.J. III"/>
            <person name="Porcella S.F."/>
            <person name="Samuel J.E."/>
            <person name="Heinzen R.A."/>
        </authorList>
    </citation>
    <scope>NUCLEOTIDE SEQUENCE [LARGE SCALE GENOMIC DNA]</scope>
    <source>
        <strain>CbuK_Q154</strain>
    </source>
</reference>
<evidence type="ECO:0000255" key="1">
    <source>
        <dbReference type="HAMAP-Rule" id="MF_01326"/>
    </source>
</evidence>
<evidence type="ECO:0000305" key="2"/>
<gene>
    <name evidence="1" type="primary">rplX</name>
    <name type="ordered locus">CbuK_0444</name>
</gene>